<organism>
    <name type="scientific">Legionella pneumophila (strain Paris)</name>
    <dbReference type="NCBI Taxonomy" id="297246"/>
    <lineage>
        <taxon>Bacteria</taxon>
        <taxon>Pseudomonadati</taxon>
        <taxon>Pseudomonadota</taxon>
        <taxon>Gammaproteobacteria</taxon>
        <taxon>Legionellales</taxon>
        <taxon>Legionellaceae</taxon>
        <taxon>Legionella</taxon>
    </lineage>
</organism>
<protein>
    <recommendedName>
        <fullName evidence="1">Large ribosomal subunit protein bL12</fullName>
    </recommendedName>
    <alternativeName>
        <fullName evidence="2">50S ribosomal protein L7/L12</fullName>
    </alternativeName>
</protein>
<name>RL7_LEGPA</name>
<comment type="function">
    <text evidence="1">Forms part of the ribosomal stalk which helps the ribosome interact with GTP-bound translation factors. Is thus essential for accurate translation.</text>
</comment>
<comment type="subunit">
    <text evidence="1">Homodimer. Part of the ribosomal stalk of the 50S ribosomal subunit. Forms a multimeric L10(L12)X complex, where L10 forms an elongated spine to which 2 to 4 L12 dimers bind in a sequential fashion. Binds GTP-bound translation factors.</text>
</comment>
<comment type="similarity">
    <text evidence="1">Belongs to the bacterial ribosomal protein bL12 family.</text>
</comment>
<feature type="chain" id="PRO_0000243441" description="Large ribosomal subunit protein bL12">
    <location>
        <begin position="1"/>
        <end position="126"/>
    </location>
</feature>
<evidence type="ECO:0000255" key="1">
    <source>
        <dbReference type="HAMAP-Rule" id="MF_00368"/>
    </source>
</evidence>
<evidence type="ECO:0000305" key="2"/>
<reference key="1">
    <citation type="journal article" date="2004" name="Nat. Genet.">
        <title>Evidence in the Legionella pneumophila genome for exploitation of host cell functions and high genome plasticity.</title>
        <authorList>
            <person name="Cazalet C."/>
            <person name="Rusniok C."/>
            <person name="Brueggemann H."/>
            <person name="Zidane N."/>
            <person name="Magnier A."/>
            <person name="Ma L."/>
            <person name="Tichit M."/>
            <person name="Jarraud S."/>
            <person name="Bouchier C."/>
            <person name="Vandenesch F."/>
            <person name="Kunst F."/>
            <person name="Etienne J."/>
            <person name="Glaser P."/>
            <person name="Buchrieser C."/>
        </authorList>
    </citation>
    <scope>NUCLEOTIDE SEQUENCE [LARGE SCALE GENOMIC DNA]</scope>
    <source>
        <strain>Paris</strain>
    </source>
</reference>
<accession>Q5X867</accession>
<gene>
    <name evidence="1" type="primary">rplL</name>
    <name type="ordered locus">lpp0386</name>
</gene>
<sequence>MAVSKNEILETISNMTVMEVVELIEAMEEKFNVSAAAAAVAVAAPAAGAGAAAAEEQTEFTVVMTSFGSNKVNVIKAIRGITGLGLKEAKDLVEGAPSTVKEGVSKDEAASIKKELEEAGATVEVK</sequence>
<dbReference type="EMBL" id="CR628336">
    <property type="protein sequence ID" value="CAH11534.1"/>
    <property type="molecule type" value="Genomic_DNA"/>
</dbReference>
<dbReference type="RefSeq" id="WP_010946072.1">
    <property type="nucleotide sequence ID" value="NC_006368.1"/>
</dbReference>
<dbReference type="SMR" id="Q5X867"/>
<dbReference type="GeneID" id="57034324"/>
<dbReference type="KEGG" id="lpp:lpp0386"/>
<dbReference type="LegioList" id="lpp0386"/>
<dbReference type="HOGENOM" id="CLU_086499_3_2_6"/>
<dbReference type="GO" id="GO:0022625">
    <property type="term" value="C:cytosolic large ribosomal subunit"/>
    <property type="evidence" value="ECO:0007669"/>
    <property type="project" value="TreeGrafter"/>
</dbReference>
<dbReference type="GO" id="GO:0003729">
    <property type="term" value="F:mRNA binding"/>
    <property type="evidence" value="ECO:0007669"/>
    <property type="project" value="TreeGrafter"/>
</dbReference>
<dbReference type="GO" id="GO:0003735">
    <property type="term" value="F:structural constituent of ribosome"/>
    <property type="evidence" value="ECO:0007669"/>
    <property type="project" value="InterPro"/>
</dbReference>
<dbReference type="GO" id="GO:0006412">
    <property type="term" value="P:translation"/>
    <property type="evidence" value="ECO:0007669"/>
    <property type="project" value="UniProtKB-UniRule"/>
</dbReference>
<dbReference type="CDD" id="cd00387">
    <property type="entry name" value="Ribosomal_L7_L12"/>
    <property type="match status" value="1"/>
</dbReference>
<dbReference type="FunFam" id="3.30.1390.10:FF:000001">
    <property type="entry name" value="50S ribosomal protein L7/L12"/>
    <property type="match status" value="1"/>
</dbReference>
<dbReference type="Gene3D" id="3.30.1390.10">
    <property type="match status" value="1"/>
</dbReference>
<dbReference type="Gene3D" id="1.20.5.710">
    <property type="entry name" value="Single helix bin"/>
    <property type="match status" value="1"/>
</dbReference>
<dbReference type="HAMAP" id="MF_00368">
    <property type="entry name" value="Ribosomal_bL12"/>
    <property type="match status" value="1"/>
</dbReference>
<dbReference type="InterPro" id="IPR000206">
    <property type="entry name" value="Ribosomal_bL12"/>
</dbReference>
<dbReference type="InterPro" id="IPR013823">
    <property type="entry name" value="Ribosomal_bL12_C"/>
</dbReference>
<dbReference type="InterPro" id="IPR014719">
    <property type="entry name" value="Ribosomal_bL12_C/ClpS-like"/>
</dbReference>
<dbReference type="InterPro" id="IPR008932">
    <property type="entry name" value="Ribosomal_bL12_oligo"/>
</dbReference>
<dbReference type="InterPro" id="IPR036235">
    <property type="entry name" value="Ribosomal_bL12_oligo_N_sf"/>
</dbReference>
<dbReference type="NCBIfam" id="TIGR00855">
    <property type="entry name" value="L12"/>
    <property type="match status" value="1"/>
</dbReference>
<dbReference type="PANTHER" id="PTHR45987">
    <property type="entry name" value="39S RIBOSOMAL PROTEIN L12"/>
    <property type="match status" value="1"/>
</dbReference>
<dbReference type="PANTHER" id="PTHR45987:SF4">
    <property type="entry name" value="LARGE RIBOSOMAL SUBUNIT PROTEIN BL12M"/>
    <property type="match status" value="1"/>
</dbReference>
<dbReference type="Pfam" id="PF00542">
    <property type="entry name" value="Ribosomal_L12"/>
    <property type="match status" value="1"/>
</dbReference>
<dbReference type="Pfam" id="PF16320">
    <property type="entry name" value="Ribosomal_L12_N"/>
    <property type="match status" value="1"/>
</dbReference>
<dbReference type="SUPFAM" id="SSF54736">
    <property type="entry name" value="ClpS-like"/>
    <property type="match status" value="1"/>
</dbReference>
<dbReference type="SUPFAM" id="SSF48300">
    <property type="entry name" value="Ribosomal protein L7/12, oligomerisation (N-terminal) domain"/>
    <property type="match status" value="1"/>
</dbReference>
<proteinExistence type="inferred from homology"/>
<keyword id="KW-0687">Ribonucleoprotein</keyword>
<keyword id="KW-0689">Ribosomal protein</keyword>